<protein>
    <recommendedName>
        <fullName evidence="8">Membrane protein BRI3</fullName>
    </recommendedName>
    <alternativeName>
        <fullName evidence="10">Brain protein I3</fullName>
    </alternativeName>
    <alternativeName>
        <fullName>pRGR2</fullName>
    </alternativeName>
</protein>
<evidence type="ECO:0000250" key="1">
    <source>
        <dbReference type="UniProtKB" id="P28662"/>
    </source>
</evidence>
<evidence type="ECO:0000255" key="2"/>
<evidence type="ECO:0000269" key="3">
    <source>
    </source>
</evidence>
<evidence type="ECO:0000269" key="4">
    <source>
    </source>
</evidence>
<evidence type="ECO:0000269" key="5">
    <source>
    </source>
</evidence>
<evidence type="ECO:0000269" key="6">
    <source>
    </source>
</evidence>
<evidence type="ECO:0000303" key="7">
    <source>
    </source>
</evidence>
<evidence type="ECO:0000305" key="8"/>
<evidence type="ECO:0000305" key="9">
    <source>
    </source>
</evidence>
<evidence type="ECO:0000312" key="10">
    <source>
        <dbReference type="HGNC" id="HGNC:1109"/>
    </source>
</evidence>
<reference key="1">
    <citation type="submission" date="1998-11" db="EMBL/GenBank/DDBJ databases">
        <title>The gene encoding the chick orthologue of mouse brain protein I3 is expressed in the inner ear.</title>
        <authorList>
            <person name="Adler H.J."/>
            <person name="Warner S.J."/>
            <person name="Rossi A.M."/>
            <person name="Lomax M.I."/>
        </authorList>
    </citation>
    <scope>NUCLEOTIDE SEQUENCE [MRNA]</scope>
    <source>
        <tissue>Brain</tissue>
    </source>
</reference>
<reference key="2">
    <citation type="submission" date="2001-02" db="EMBL/GenBank/DDBJ databases">
        <title>Human full-length cDNA for I3 protein.</title>
        <authorList>
            <person name="Kato S."/>
        </authorList>
    </citation>
    <scope>NUCLEOTIDE SEQUENCE [MRNA]</scope>
    <source>
        <tissue>Gastric adenocarcinoma</tissue>
    </source>
</reference>
<reference key="3">
    <citation type="submission" date="2002-04" db="EMBL/GenBank/DDBJ databases">
        <authorList>
            <person name="Hu Y.F."/>
            <person name="Mao X.H."/>
            <person name="Zhuang M."/>
            <person name="Lu C.D."/>
        </authorList>
    </citation>
    <scope>NUCLEOTIDE SEQUENCE [MRNA]</scope>
    <source>
        <tissue>Cervix carcinoma</tissue>
    </source>
</reference>
<reference key="4">
    <citation type="journal article" date="2003" name="Nature">
        <title>The DNA sequence of human chromosome 7.</title>
        <authorList>
            <person name="Hillier L.W."/>
            <person name="Fulton R.S."/>
            <person name="Fulton L.A."/>
            <person name="Graves T.A."/>
            <person name="Pepin K.H."/>
            <person name="Wagner-McPherson C."/>
            <person name="Layman D."/>
            <person name="Maas J."/>
            <person name="Jaeger S."/>
            <person name="Walker R."/>
            <person name="Wylie K."/>
            <person name="Sekhon M."/>
            <person name="Becker M.C."/>
            <person name="O'Laughlin M.D."/>
            <person name="Schaller M.E."/>
            <person name="Fewell G.A."/>
            <person name="Delehaunty K.D."/>
            <person name="Miner T.L."/>
            <person name="Nash W.E."/>
            <person name="Cordes M."/>
            <person name="Du H."/>
            <person name="Sun H."/>
            <person name="Edwards J."/>
            <person name="Bradshaw-Cordum H."/>
            <person name="Ali J."/>
            <person name="Andrews S."/>
            <person name="Isak A."/>
            <person name="Vanbrunt A."/>
            <person name="Nguyen C."/>
            <person name="Du F."/>
            <person name="Lamar B."/>
            <person name="Courtney L."/>
            <person name="Kalicki J."/>
            <person name="Ozersky P."/>
            <person name="Bielicki L."/>
            <person name="Scott K."/>
            <person name="Holmes A."/>
            <person name="Harkins R."/>
            <person name="Harris A."/>
            <person name="Strong C.M."/>
            <person name="Hou S."/>
            <person name="Tomlinson C."/>
            <person name="Dauphin-Kohlberg S."/>
            <person name="Kozlowicz-Reilly A."/>
            <person name="Leonard S."/>
            <person name="Rohlfing T."/>
            <person name="Rock S.M."/>
            <person name="Tin-Wollam A.-M."/>
            <person name="Abbott A."/>
            <person name="Minx P."/>
            <person name="Maupin R."/>
            <person name="Strowmatt C."/>
            <person name="Latreille P."/>
            <person name="Miller N."/>
            <person name="Johnson D."/>
            <person name="Murray J."/>
            <person name="Woessner J.P."/>
            <person name="Wendl M.C."/>
            <person name="Yang S.-P."/>
            <person name="Schultz B.R."/>
            <person name="Wallis J.W."/>
            <person name="Spieth J."/>
            <person name="Bieri T.A."/>
            <person name="Nelson J.O."/>
            <person name="Berkowicz N."/>
            <person name="Wohldmann P.E."/>
            <person name="Cook L.L."/>
            <person name="Hickenbotham M.T."/>
            <person name="Eldred J."/>
            <person name="Williams D."/>
            <person name="Bedell J.A."/>
            <person name="Mardis E.R."/>
            <person name="Clifton S.W."/>
            <person name="Chissoe S.L."/>
            <person name="Marra M.A."/>
            <person name="Raymond C."/>
            <person name="Haugen E."/>
            <person name="Gillett W."/>
            <person name="Zhou Y."/>
            <person name="James R."/>
            <person name="Phelps K."/>
            <person name="Iadanoto S."/>
            <person name="Bubb K."/>
            <person name="Simms E."/>
            <person name="Levy R."/>
            <person name="Clendenning J."/>
            <person name="Kaul R."/>
            <person name="Kent W.J."/>
            <person name="Furey T.S."/>
            <person name="Baertsch R.A."/>
            <person name="Brent M.R."/>
            <person name="Keibler E."/>
            <person name="Flicek P."/>
            <person name="Bork P."/>
            <person name="Suyama M."/>
            <person name="Bailey J.A."/>
            <person name="Portnoy M.E."/>
            <person name="Torrents D."/>
            <person name="Chinwalla A.T."/>
            <person name="Gish W.R."/>
            <person name="Eddy S.R."/>
            <person name="McPherson J.D."/>
            <person name="Olson M.V."/>
            <person name="Eichler E.E."/>
            <person name="Green E.D."/>
            <person name="Waterston R.H."/>
            <person name="Wilson R.K."/>
        </authorList>
    </citation>
    <scope>NUCLEOTIDE SEQUENCE [LARGE SCALE GENOMIC DNA]</scope>
</reference>
<reference key="5">
    <citation type="submission" date="2005-09" db="EMBL/GenBank/DDBJ databases">
        <authorList>
            <person name="Mural R.J."/>
            <person name="Istrail S."/>
            <person name="Sutton G.G."/>
            <person name="Florea L."/>
            <person name="Halpern A.L."/>
            <person name="Mobarry C.M."/>
            <person name="Lippert R."/>
            <person name="Walenz B."/>
            <person name="Shatkay H."/>
            <person name="Dew I."/>
            <person name="Miller J.R."/>
            <person name="Flanigan M.J."/>
            <person name="Edwards N.J."/>
            <person name="Bolanos R."/>
            <person name="Fasulo D."/>
            <person name="Halldorsson B.V."/>
            <person name="Hannenhalli S."/>
            <person name="Turner R."/>
            <person name="Yooseph S."/>
            <person name="Lu F."/>
            <person name="Nusskern D.R."/>
            <person name="Shue B.C."/>
            <person name="Zheng X.H."/>
            <person name="Zhong F."/>
            <person name="Delcher A.L."/>
            <person name="Huson D.H."/>
            <person name="Kravitz S.A."/>
            <person name="Mouchard L."/>
            <person name="Reinert K."/>
            <person name="Remington K.A."/>
            <person name="Clark A.G."/>
            <person name="Waterman M.S."/>
            <person name="Eichler E.E."/>
            <person name="Adams M.D."/>
            <person name="Hunkapiller M.W."/>
            <person name="Myers E.W."/>
            <person name="Venter J.C."/>
        </authorList>
    </citation>
    <scope>NUCLEOTIDE SEQUENCE [LARGE SCALE GENOMIC DNA]</scope>
</reference>
<reference key="6">
    <citation type="journal article" date="2004" name="Genome Res.">
        <title>The status, quality, and expansion of the NIH full-length cDNA project: the Mammalian Gene Collection (MGC).</title>
        <authorList>
            <consortium name="The MGC Project Team"/>
        </authorList>
    </citation>
    <scope>NUCLEOTIDE SEQUENCE [LARGE SCALE MRNA]</scope>
    <source>
        <tissue>Eye</tissue>
        <tissue>Ovary</tissue>
    </source>
</reference>
<reference key="7">
    <citation type="journal article" date="2001" name="Biochem. Genet.">
        <title>Cloning, tissue expression pattern, and chromosome location of a novel human gene BRI3BP.</title>
        <authorList>
            <person name="Lin L."/>
            <person name="Wu Y."/>
            <person name="Li C."/>
            <person name="Zhao S."/>
        </authorList>
    </citation>
    <scope>INTERACTION WITH BRI3BP</scope>
</reference>
<reference key="8">
    <citation type="journal article" date="2003" name="Biochem. Biophys. Res. Commun.">
        <title>bri3, a novel gene, participates in tumor necrosis factor-alpha-induced cell death.</title>
        <authorList>
            <person name="Wu H."/>
            <person name="Liu G."/>
            <person name="Li C."/>
            <person name="Zhao S."/>
        </authorList>
    </citation>
    <scope>FUNCTION</scope>
    <scope>SUBCELLULAR LOCATION</scope>
</reference>
<reference key="9">
    <citation type="journal article" date="2010" name="Cell. Signal.">
        <title>Analysis of the Wnt/B-catenin/TCF4 pathway using SAGE, genome-wide microarray and promoter analysis: Identification of BRI3 and HSF2 as novel targets.</title>
        <authorList>
            <person name="Kavak E."/>
            <person name="Najafov A."/>
            <person name="Ozturk N."/>
            <person name="Seker T."/>
            <person name="Cavusoglu K."/>
            <person name="Aslan T."/>
            <person name="Duru A.D."/>
            <person name="Saygili T."/>
            <person name="Hoxhaj G."/>
            <person name="Hiz M.C."/>
            <person name="Unal D.O."/>
            <person name="Birguel-Iyison N."/>
            <person name="Ozturk M."/>
            <person name="Koman A."/>
        </authorList>
    </citation>
    <scope>FUNCTION</scope>
    <scope>INDUCTION</scope>
</reference>
<reference key="10">
    <citation type="journal article" date="2018" name="Turk. J. Biol.">
        <title>Identification of IFITM3 and MGAT1 as novel interaction partners of BRI3 by yeast two-hybrid screening.</title>
        <authorList>
            <person name="Akiva I."/>
            <person name="Birguel Iyison N."/>
        </authorList>
    </citation>
    <scope>INTERACTION WITH BRI3BP; MGAT1 AND IFITM3 (ISOFORMS 1 AND 2)</scope>
    <scope>SUBCELLULAR LOCATION (ISOFORMS 1 AND 2)</scope>
</reference>
<proteinExistence type="evidence at protein level"/>
<name>BRI3_HUMAN</name>
<organism>
    <name type="scientific">Homo sapiens</name>
    <name type="common">Human</name>
    <dbReference type="NCBI Taxonomy" id="9606"/>
    <lineage>
        <taxon>Eukaryota</taxon>
        <taxon>Metazoa</taxon>
        <taxon>Chordata</taxon>
        <taxon>Craniata</taxon>
        <taxon>Vertebrata</taxon>
        <taxon>Euteleostomi</taxon>
        <taxon>Mammalia</taxon>
        <taxon>Eutheria</taxon>
        <taxon>Euarchontoglires</taxon>
        <taxon>Primates</taxon>
        <taxon>Haplorrhini</taxon>
        <taxon>Catarrhini</taxon>
        <taxon>Hominidae</taxon>
        <taxon>Homo</taxon>
    </lineage>
</organism>
<sequence>MDHKPLLQERPPAYNLEAGQGDYACGPHGYGAIPAAPPPPPYPYLVTGIPTHHPRVYNIHSRTVTRYPANSIVVVGGCPVCRVGVLEDCFTFLGIFLAIILFPFGFICCFALRKRRCPNCGATFA</sequence>
<gene>
    <name type="primary">BRI3</name>
</gene>
<comment type="function">
    <text evidence="4 5">Participates in tumor necrosis factor-alpha (TNF)-induced cell death (PubMed:14592447). May be a target of Wnt/beta-catenin signaling in the liver (PubMed:20538055).</text>
</comment>
<comment type="subunit">
    <molecule>Isoform 1</molecule>
    <text evidence="3 6">Interacts with BRI3BP (PubMed:11860200, PubMed:30983867). Interacts with MGAT1 and IFITM3 (PubMed:30983867).</text>
</comment>
<comment type="subunit">
    <molecule>Isoform 2</molecule>
    <text evidence="6">Interacts with BRI3BP, MGAT1 and IFITM3; the interactions are weaker than with isoform 1.</text>
</comment>
<comment type="interaction">
    <interactant intactId="EBI-2874789">
        <id>O95415</id>
    </interactant>
    <interactant intactId="EBI-348517">
        <id>O95870</id>
        <label>ABHD16A</label>
    </interactant>
    <organismsDiffer>false</organismsDiffer>
    <experiments>3</experiments>
</comment>
<comment type="interaction">
    <interactant intactId="EBI-2874789">
        <id>O95415</id>
    </interactant>
    <interactant intactId="EBI-359348">
        <id>Q8WY22</id>
        <label>BRI3BP</label>
    </interactant>
    <organismsDiffer>false</organismsDiffer>
    <experiments>3</experiments>
</comment>
<comment type="interaction">
    <interactant intactId="EBI-2874789">
        <id>O95415</id>
    </interactant>
    <interactant intactId="EBI-7932862">
        <id>Q01628</id>
        <label>IFITM3</label>
    </interactant>
    <organismsDiffer>false</organismsDiffer>
    <experiments>6</experiments>
</comment>
<comment type="interaction">
    <interactant intactId="EBI-2874789">
        <id>O95415</id>
    </interactant>
    <interactant intactId="EBI-750078">
        <id>Q13021</id>
        <label>MALL</label>
    </interactant>
    <organismsDiffer>false</organismsDiffer>
    <experiments>3</experiments>
</comment>
<comment type="interaction">
    <interactant intactId="EBI-2874789">
        <id>O95415</id>
    </interactant>
    <interactant intactId="EBI-7211952">
        <id>P26572</id>
        <label>MGAT1</label>
    </interactant>
    <organismsDiffer>false</organismsDiffer>
    <experiments>6</experiments>
</comment>
<comment type="subcellular location">
    <subcellularLocation>
        <location evidence="9">Lysosome membrane</location>
        <topology evidence="2">Multi-pass membrane protein</topology>
    </subcellularLocation>
</comment>
<comment type="subcellular location">
    <molecule>Isoform 1</molecule>
    <subcellularLocation>
        <location evidence="6">Cytoplasm</location>
        <location evidence="6">Perinuclear region</location>
    </subcellularLocation>
    <text evidence="6">Co-localizes with MGAT1 and IFITM3 at the perinuclear region.</text>
</comment>
<comment type="subcellular location">
    <molecule>Isoform 2</molecule>
    <subcellularLocation>
        <location evidence="6">Cytoplasm</location>
    </subcellularLocation>
    <subcellularLocation>
        <location evidence="6">Nucleus</location>
    </subcellularLocation>
    <text evidence="6">Diffuse localization in the cytoplasm and nucleus.</text>
</comment>
<comment type="alternative products">
    <event type="alternative splicing"/>
    <isoform>
        <id>O95415-1</id>
        <name evidence="10">1</name>
        <name evidence="7">a</name>
        <sequence type="displayed"/>
    </isoform>
    <isoform>
        <id>O95415-2</id>
        <name evidence="10">2</name>
        <name evidence="7">b</name>
        <sequence type="described" ref="VSP_060620 VSP_060621"/>
    </isoform>
</comment>
<comment type="induction">
    <text evidence="1 5">Up-regulated during TNF-mediated inflammation and immunity (By similarity). Up-regulated by beta-catenin and TCF4 (PubMed:20538055).</text>
</comment>
<comment type="similarity">
    <text evidence="8">Belongs to the BRI3 family.</text>
</comment>
<feature type="chain" id="PRO_0000064923" description="Membrane protein BRI3">
    <location>
        <begin position="1"/>
        <end position="125"/>
    </location>
</feature>
<feature type="transmembrane region" description="Helical" evidence="2">
    <location>
        <begin position="67"/>
        <end position="86"/>
    </location>
</feature>
<feature type="transmembrane region" description="Helical" evidence="2">
    <location>
        <begin position="92"/>
        <end position="112"/>
    </location>
</feature>
<feature type="splice variant" id="VSP_060620" description="In isoform 2." evidence="8">
    <original>VGVLEDCFTFLGIFLA</original>
    <variation>HQRSSWLYTYPLRVCT</variation>
    <location>
        <begin position="83"/>
        <end position="98"/>
    </location>
</feature>
<feature type="splice variant" id="VSP_060621" description="In isoform 2." evidence="8">
    <location>
        <begin position="99"/>
        <end position="125"/>
    </location>
</feature>
<feature type="sequence variant" id="VAR_033516" description="In dbSNP:rs12865.">
    <original>T</original>
    <variation>A</variation>
    <location>
        <position position="123"/>
    </location>
</feature>
<feature type="sequence conflict" description="In Ref. 6; AAH18737." evidence="8" ref="6">
    <original>H</original>
    <variation>Y</variation>
    <location>
        <position position="53"/>
    </location>
</feature>
<dbReference type="EMBL" id="AF106966">
    <property type="protein sequence ID" value="AAD05167.1"/>
    <property type="molecule type" value="mRNA"/>
</dbReference>
<dbReference type="EMBL" id="AB055977">
    <property type="protein sequence ID" value="BAB32785.1"/>
    <property type="molecule type" value="mRNA"/>
</dbReference>
<dbReference type="EMBL" id="AF041430">
    <property type="protein sequence ID" value="AAF18565.2"/>
    <property type="molecule type" value="mRNA"/>
</dbReference>
<dbReference type="EMBL" id="AC004841">
    <property type="status" value="NOT_ANNOTATED_CDS"/>
    <property type="molecule type" value="Genomic_DNA"/>
</dbReference>
<dbReference type="EMBL" id="AC091654">
    <property type="status" value="NOT_ANNOTATED_CDS"/>
    <property type="molecule type" value="Genomic_DNA"/>
</dbReference>
<dbReference type="EMBL" id="AC093169">
    <property type="status" value="NOT_ANNOTATED_CDS"/>
    <property type="molecule type" value="Genomic_DNA"/>
</dbReference>
<dbReference type="EMBL" id="CH471091">
    <property type="protein sequence ID" value="EAW76713.1"/>
    <property type="molecule type" value="Genomic_DNA"/>
</dbReference>
<dbReference type="EMBL" id="CH471091">
    <property type="protein sequence ID" value="EAW76714.1"/>
    <property type="molecule type" value="Genomic_DNA"/>
</dbReference>
<dbReference type="EMBL" id="CH471091">
    <property type="protein sequence ID" value="EAW76715.1"/>
    <property type="molecule type" value="Genomic_DNA"/>
</dbReference>
<dbReference type="EMBL" id="BC018737">
    <property type="protein sequence ID" value="AAH18737.1"/>
    <property type="molecule type" value="mRNA"/>
</dbReference>
<dbReference type="EMBL" id="BC062370">
    <property type="protein sequence ID" value="AAH62370.1"/>
    <property type="molecule type" value="mRNA"/>
</dbReference>
<dbReference type="CCDS" id="CCDS55133.1">
    <molecule id="O95415-2"/>
</dbReference>
<dbReference type="CCDS" id="CCDS5656.1">
    <molecule id="O95415-1"/>
</dbReference>
<dbReference type="RefSeq" id="NP_001152963.1">
    <molecule id="O95415-2"/>
    <property type="nucleotide sequence ID" value="NM_001159491.2"/>
</dbReference>
<dbReference type="RefSeq" id="NP_056194.1">
    <molecule id="O95415-1"/>
    <property type="nucleotide sequence ID" value="NM_015379.5"/>
</dbReference>
<dbReference type="BioGRID" id="117330">
    <property type="interactions" value="6"/>
</dbReference>
<dbReference type="FunCoup" id="O95415">
    <property type="interactions" value="195"/>
</dbReference>
<dbReference type="IntAct" id="O95415">
    <property type="interactions" value="7"/>
</dbReference>
<dbReference type="STRING" id="9606.ENSP00000297290"/>
<dbReference type="iPTMnet" id="O95415"/>
<dbReference type="PhosphoSitePlus" id="O95415"/>
<dbReference type="BioMuta" id="BRI3"/>
<dbReference type="jPOST" id="O95415"/>
<dbReference type="MassIVE" id="O95415"/>
<dbReference type="PaxDb" id="9606-ENSP00000297290"/>
<dbReference type="PeptideAtlas" id="O95415"/>
<dbReference type="ProteomicsDB" id="24549"/>
<dbReference type="ProteomicsDB" id="50863"/>
<dbReference type="Antibodypedia" id="49158">
    <property type="antibodies" value="51 antibodies from 19 providers"/>
</dbReference>
<dbReference type="DNASU" id="25798"/>
<dbReference type="Ensembl" id="ENST00000297290.4">
    <molecule id="O95415-1"/>
    <property type="protein sequence ID" value="ENSP00000297290.3"/>
    <property type="gene ID" value="ENSG00000164713.10"/>
</dbReference>
<dbReference type="Ensembl" id="ENST00000539286.5">
    <molecule id="O95415-2"/>
    <property type="protein sequence ID" value="ENSP00000440936.1"/>
    <property type="gene ID" value="ENSG00000164713.10"/>
</dbReference>
<dbReference type="GeneID" id="25798"/>
<dbReference type="KEGG" id="hsa:25798"/>
<dbReference type="MANE-Select" id="ENST00000297290.4">
    <property type="protein sequence ID" value="ENSP00000297290.3"/>
    <property type="RefSeq nucleotide sequence ID" value="NM_015379.5"/>
    <property type="RefSeq protein sequence ID" value="NP_056194.1"/>
</dbReference>
<dbReference type="UCSC" id="uc003upi.3">
    <molecule id="O95415-1"/>
    <property type="organism name" value="human"/>
</dbReference>
<dbReference type="AGR" id="HGNC:1109"/>
<dbReference type="CTD" id="25798"/>
<dbReference type="DisGeNET" id="25798"/>
<dbReference type="GeneCards" id="BRI3"/>
<dbReference type="HGNC" id="HGNC:1109">
    <property type="gene designation" value="BRI3"/>
</dbReference>
<dbReference type="HPA" id="ENSG00000164713">
    <property type="expression patterns" value="Low tissue specificity"/>
</dbReference>
<dbReference type="MIM" id="615628">
    <property type="type" value="gene"/>
</dbReference>
<dbReference type="neXtProt" id="NX_O95415"/>
<dbReference type="OpenTargets" id="ENSG00000164713"/>
<dbReference type="PharmGKB" id="PA25422"/>
<dbReference type="VEuPathDB" id="HostDB:ENSG00000164713"/>
<dbReference type="eggNOG" id="KOG4517">
    <property type="taxonomic scope" value="Eukaryota"/>
</dbReference>
<dbReference type="GeneTree" id="ENSGT00510000048486"/>
<dbReference type="HOGENOM" id="CLU_138141_0_0_1"/>
<dbReference type="InParanoid" id="O95415"/>
<dbReference type="OMA" id="YEYGPQQ"/>
<dbReference type="OrthoDB" id="2564984at2759"/>
<dbReference type="PAN-GO" id="O95415">
    <property type="GO annotations" value="0 GO annotations based on evolutionary models"/>
</dbReference>
<dbReference type="PhylomeDB" id="O95415"/>
<dbReference type="TreeFam" id="TF329242"/>
<dbReference type="PathwayCommons" id="O95415"/>
<dbReference type="Reactome" id="R-HSA-6798695">
    <property type="pathway name" value="Neutrophil degranulation"/>
</dbReference>
<dbReference type="SignaLink" id="O95415"/>
<dbReference type="BioGRID-ORCS" id="25798">
    <property type="hits" value="123 hits in 1160 CRISPR screens"/>
</dbReference>
<dbReference type="ChiTaRS" id="BRI3">
    <property type="organism name" value="human"/>
</dbReference>
<dbReference type="GenomeRNAi" id="25798"/>
<dbReference type="Pharos" id="O95415">
    <property type="development level" value="Tbio"/>
</dbReference>
<dbReference type="PRO" id="PR:O95415"/>
<dbReference type="Proteomes" id="UP000005640">
    <property type="component" value="Chromosome 7"/>
</dbReference>
<dbReference type="RNAct" id="O95415">
    <property type="molecule type" value="protein"/>
</dbReference>
<dbReference type="Bgee" id="ENSG00000164713">
    <property type="expression patterns" value="Expressed in right lung and 184 other cell types or tissues"/>
</dbReference>
<dbReference type="ExpressionAtlas" id="O95415">
    <property type="expression patterns" value="baseline and differential"/>
</dbReference>
<dbReference type="GO" id="GO:0035577">
    <property type="term" value="C:azurophil granule membrane"/>
    <property type="evidence" value="ECO:0000304"/>
    <property type="project" value="Reactome"/>
</dbReference>
<dbReference type="GO" id="GO:0005634">
    <property type="term" value="C:nucleus"/>
    <property type="evidence" value="ECO:0007669"/>
    <property type="project" value="UniProtKB-SubCell"/>
</dbReference>
<dbReference type="GO" id="GO:0048471">
    <property type="term" value="C:perinuclear region of cytoplasm"/>
    <property type="evidence" value="ECO:0007669"/>
    <property type="project" value="UniProtKB-SubCell"/>
</dbReference>
<dbReference type="GO" id="GO:0005886">
    <property type="term" value="C:plasma membrane"/>
    <property type="evidence" value="ECO:0000304"/>
    <property type="project" value="Reactome"/>
</dbReference>
<dbReference type="GO" id="GO:0042802">
    <property type="term" value="F:identical protein binding"/>
    <property type="evidence" value="ECO:0000314"/>
    <property type="project" value="MGI"/>
</dbReference>
<dbReference type="InterPro" id="IPR019317">
    <property type="entry name" value="BRI3"/>
</dbReference>
<dbReference type="PANTHER" id="PTHR13551">
    <property type="entry name" value="BRAIN PROTEIN I3"/>
    <property type="match status" value="1"/>
</dbReference>
<dbReference type="PANTHER" id="PTHR13551:SF1">
    <property type="entry name" value="MEMBRANE PROTEIN BRI3"/>
    <property type="match status" value="1"/>
</dbReference>
<dbReference type="Pfam" id="PF10164">
    <property type="entry name" value="BRI3"/>
    <property type="match status" value="1"/>
</dbReference>
<accession>O95415</accession>
<accession>D6W5R8</accession>
<accession>F5GXW6</accession>
<accession>Q8WV52</accession>
<accession>Q9UIC6</accession>
<keyword id="KW-0025">Alternative splicing</keyword>
<keyword id="KW-0963">Cytoplasm</keyword>
<keyword id="KW-0458">Lysosome</keyword>
<keyword id="KW-0472">Membrane</keyword>
<keyword id="KW-0539">Nucleus</keyword>
<keyword id="KW-1267">Proteomics identification</keyword>
<keyword id="KW-1185">Reference proteome</keyword>
<keyword id="KW-0812">Transmembrane</keyword>
<keyword id="KW-1133">Transmembrane helix</keyword>